<accession>O07573</accession>
<feature type="chain" id="PRO_0000109567" description="HTH-type transcriptional regulator NsrR">
    <location>
        <begin position="1"/>
        <end position="146"/>
    </location>
</feature>
<feature type="domain" description="HTH rrf2-type" evidence="1">
    <location>
        <begin position="2"/>
        <end position="133"/>
    </location>
</feature>
<feature type="DNA-binding region" description="H-T-H motif" evidence="1">
    <location>
        <begin position="28"/>
        <end position="51"/>
    </location>
</feature>
<feature type="binding site" evidence="1">
    <location>
        <position position="92"/>
    </location>
    <ligand>
        <name>[2Fe-2S] cluster</name>
        <dbReference type="ChEBI" id="CHEBI:190135"/>
    </ligand>
</feature>
<feature type="binding site" evidence="1">
    <location>
        <position position="100"/>
    </location>
    <ligand>
        <name>[2Fe-2S] cluster</name>
        <dbReference type="ChEBI" id="CHEBI:190135"/>
    </ligand>
</feature>
<feature type="binding site" evidence="1">
    <location>
        <position position="106"/>
    </location>
    <ligand>
        <name>[2Fe-2S] cluster</name>
        <dbReference type="ChEBI" id="CHEBI:190135"/>
    </ligand>
</feature>
<gene>
    <name type="primary">nsrR</name>
    <name type="synonym">yhdE</name>
    <name type="ordered locus">BSU09380</name>
</gene>
<comment type="function">
    <text evidence="2">Nitric oxide-responsive transcriptional regulator. It represses the expression of flavohemoprotein hmp and the nitrite reductase nasD. Probably plays a role in the up-regulation of the resDE regulon in the presence of nitric oxide.</text>
</comment>
<comment type="cofactor">
    <cofactor evidence="3">
        <name>[2Fe-2S] cluster</name>
        <dbReference type="ChEBI" id="CHEBI:190135"/>
    </cofactor>
    <text evidence="3">Binds 1 [2Fe-2S] cluster per subunit.</text>
</comment>
<keyword id="KW-0001">2Fe-2S</keyword>
<keyword id="KW-0010">Activator</keyword>
<keyword id="KW-0238">DNA-binding</keyword>
<keyword id="KW-0408">Iron</keyword>
<keyword id="KW-0411">Iron-sulfur</keyword>
<keyword id="KW-0479">Metal-binding</keyword>
<keyword id="KW-1185">Reference proteome</keyword>
<keyword id="KW-0678">Repressor</keyword>
<keyword id="KW-0804">Transcription</keyword>
<keyword id="KW-0805">Transcription regulation</keyword>
<protein>
    <recommendedName>
        <fullName>HTH-type transcriptional regulator NsrR</fullName>
    </recommendedName>
</protein>
<sequence length="146" mass="16609">MKLTNYTDYSLRVLIFLAAERPGELSNIKQIAETYSISKNHLMKVIYRLGQLGYVETIRGRGGGIRLGMDPEDINIGEVVRKTEDDFNIVECFDANKNLCVISPVCGLKHVLNEALLAYLAVLDKYTLRDLVKNKEDIMKLLKMKE</sequence>
<evidence type="ECO:0000255" key="1">
    <source>
        <dbReference type="PROSITE-ProRule" id="PRU00540"/>
    </source>
</evidence>
<evidence type="ECO:0000269" key="2">
    <source>
    </source>
</evidence>
<evidence type="ECO:0000305" key="3"/>
<name>NSRR_BACSU</name>
<organism>
    <name type="scientific">Bacillus subtilis (strain 168)</name>
    <dbReference type="NCBI Taxonomy" id="224308"/>
    <lineage>
        <taxon>Bacteria</taxon>
        <taxon>Bacillati</taxon>
        <taxon>Bacillota</taxon>
        <taxon>Bacilli</taxon>
        <taxon>Bacillales</taxon>
        <taxon>Bacillaceae</taxon>
        <taxon>Bacillus</taxon>
    </lineage>
</organism>
<reference key="1">
    <citation type="journal article" date="1998" name="Microbiology">
        <title>The 172 kb prkA-addAB region from 83 degrees to 97 degrees of the Bacillus subtilis chromosome contains several dysfunctional genes, the glyB marker, many genes encoding transporter proteins, and the ubiquitous hit gene.</title>
        <authorList>
            <person name="Noback M.A."/>
            <person name="Holsappel S."/>
            <person name="Kiewiet R."/>
            <person name="Terpstra P."/>
            <person name="Wambutt R."/>
            <person name="Wedler H."/>
            <person name="Venema G."/>
            <person name="Bron S."/>
        </authorList>
    </citation>
    <scope>NUCLEOTIDE SEQUENCE [GENOMIC DNA]</scope>
    <source>
        <strain>168</strain>
    </source>
</reference>
<reference key="2">
    <citation type="journal article" date="1997" name="Nature">
        <title>The complete genome sequence of the Gram-positive bacterium Bacillus subtilis.</title>
        <authorList>
            <person name="Kunst F."/>
            <person name="Ogasawara N."/>
            <person name="Moszer I."/>
            <person name="Albertini A.M."/>
            <person name="Alloni G."/>
            <person name="Azevedo V."/>
            <person name="Bertero M.G."/>
            <person name="Bessieres P."/>
            <person name="Bolotin A."/>
            <person name="Borchert S."/>
            <person name="Borriss R."/>
            <person name="Boursier L."/>
            <person name="Brans A."/>
            <person name="Braun M."/>
            <person name="Brignell S.C."/>
            <person name="Bron S."/>
            <person name="Brouillet S."/>
            <person name="Bruschi C.V."/>
            <person name="Caldwell B."/>
            <person name="Capuano V."/>
            <person name="Carter N.M."/>
            <person name="Choi S.-K."/>
            <person name="Codani J.-J."/>
            <person name="Connerton I.F."/>
            <person name="Cummings N.J."/>
            <person name="Daniel R.A."/>
            <person name="Denizot F."/>
            <person name="Devine K.M."/>
            <person name="Duesterhoeft A."/>
            <person name="Ehrlich S.D."/>
            <person name="Emmerson P.T."/>
            <person name="Entian K.-D."/>
            <person name="Errington J."/>
            <person name="Fabret C."/>
            <person name="Ferrari E."/>
            <person name="Foulger D."/>
            <person name="Fritz C."/>
            <person name="Fujita M."/>
            <person name="Fujita Y."/>
            <person name="Fuma S."/>
            <person name="Galizzi A."/>
            <person name="Galleron N."/>
            <person name="Ghim S.-Y."/>
            <person name="Glaser P."/>
            <person name="Goffeau A."/>
            <person name="Golightly E.J."/>
            <person name="Grandi G."/>
            <person name="Guiseppi G."/>
            <person name="Guy B.J."/>
            <person name="Haga K."/>
            <person name="Haiech J."/>
            <person name="Harwood C.R."/>
            <person name="Henaut A."/>
            <person name="Hilbert H."/>
            <person name="Holsappel S."/>
            <person name="Hosono S."/>
            <person name="Hullo M.-F."/>
            <person name="Itaya M."/>
            <person name="Jones L.-M."/>
            <person name="Joris B."/>
            <person name="Karamata D."/>
            <person name="Kasahara Y."/>
            <person name="Klaerr-Blanchard M."/>
            <person name="Klein C."/>
            <person name="Kobayashi Y."/>
            <person name="Koetter P."/>
            <person name="Koningstein G."/>
            <person name="Krogh S."/>
            <person name="Kumano M."/>
            <person name="Kurita K."/>
            <person name="Lapidus A."/>
            <person name="Lardinois S."/>
            <person name="Lauber J."/>
            <person name="Lazarevic V."/>
            <person name="Lee S.-M."/>
            <person name="Levine A."/>
            <person name="Liu H."/>
            <person name="Masuda S."/>
            <person name="Mauel C."/>
            <person name="Medigue C."/>
            <person name="Medina N."/>
            <person name="Mellado R.P."/>
            <person name="Mizuno M."/>
            <person name="Moestl D."/>
            <person name="Nakai S."/>
            <person name="Noback M."/>
            <person name="Noone D."/>
            <person name="O'Reilly M."/>
            <person name="Ogawa K."/>
            <person name="Ogiwara A."/>
            <person name="Oudega B."/>
            <person name="Park S.-H."/>
            <person name="Parro V."/>
            <person name="Pohl T.M."/>
            <person name="Portetelle D."/>
            <person name="Porwollik S."/>
            <person name="Prescott A.M."/>
            <person name="Presecan E."/>
            <person name="Pujic P."/>
            <person name="Purnelle B."/>
            <person name="Rapoport G."/>
            <person name="Rey M."/>
            <person name="Reynolds S."/>
            <person name="Rieger M."/>
            <person name="Rivolta C."/>
            <person name="Rocha E."/>
            <person name="Roche B."/>
            <person name="Rose M."/>
            <person name="Sadaie Y."/>
            <person name="Sato T."/>
            <person name="Scanlan E."/>
            <person name="Schleich S."/>
            <person name="Schroeter R."/>
            <person name="Scoffone F."/>
            <person name="Sekiguchi J."/>
            <person name="Sekowska A."/>
            <person name="Seror S.J."/>
            <person name="Serror P."/>
            <person name="Shin B.-S."/>
            <person name="Soldo B."/>
            <person name="Sorokin A."/>
            <person name="Tacconi E."/>
            <person name="Takagi T."/>
            <person name="Takahashi H."/>
            <person name="Takemaru K."/>
            <person name="Takeuchi M."/>
            <person name="Tamakoshi A."/>
            <person name="Tanaka T."/>
            <person name="Terpstra P."/>
            <person name="Tognoni A."/>
            <person name="Tosato V."/>
            <person name="Uchiyama S."/>
            <person name="Vandenbol M."/>
            <person name="Vannier F."/>
            <person name="Vassarotti A."/>
            <person name="Viari A."/>
            <person name="Wambutt R."/>
            <person name="Wedler E."/>
            <person name="Wedler H."/>
            <person name="Weitzenegger T."/>
            <person name="Winters P."/>
            <person name="Wipat A."/>
            <person name="Yamamoto H."/>
            <person name="Yamane K."/>
            <person name="Yasumoto K."/>
            <person name="Yata K."/>
            <person name="Yoshida K."/>
            <person name="Yoshikawa H.-F."/>
            <person name="Zumstein E."/>
            <person name="Yoshikawa H."/>
            <person name="Danchin A."/>
        </authorList>
    </citation>
    <scope>NUCLEOTIDE SEQUENCE [LARGE SCALE GENOMIC DNA]</scope>
    <source>
        <strain>168</strain>
    </source>
</reference>
<reference key="3">
    <citation type="journal article" date="2006" name="J. Bacteriol.">
        <title>The nitric oxide-responsive regulator NsrR controls ResDE-dependent gene expression.</title>
        <authorList>
            <person name="Nakano M.M."/>
            <person name="Geng H."/>
            <person name="Nakano S."/>
            <person name="Kobayashi K."/>
        </authorList>
    </citation>
    <scope>FUNCTION</scope>
    <source>
        <strain>168 / JH642</strain>
    </source>
</reference>
<proteinExistence type="predicted"/>
<dbReference type="EMBL" id="Y14082">
    <property type="protein sequence ID" value="CAA74483.1"/>
    <property type="molecule type" value="Genomic_DNA"/>
</dbReference>
<dbReference type="EMBL" id="Y14079">
    <property type="protein sequence ID" value="CAA74438.1"/>
    <property type="molecule type" value="Genomic_DNA"/>
</dbReference>
<dbReference type="EMBL" id="AL009126">
    <property type="protein sequence ID" value="CAB12777.1"/>
    <property type="molecule type" value="Genomic_DNA"/>
</dbReference>
<dbReference type="PIR" id="C69825">
    <property type="entry name" value="C69825"/>
</dbReference>
<dbReference type="RefSeq" id="NP_388819.1">
    <property type="nucleotide sequence ID" value="NC_000964.3"/>
</dbReference>
<dbReference type="RefSeq" id="WP_003245378.1">
    <property type="nucleotide sequence ID" value="NZ_OZ025638.1"/>
</dbReference>
<dbReference type="SMR" id="O07573"/>
<dbReference type="FunCoup" id="O07573">
    <property type="interactions" value="46"/>
</dbReference>
<dbReference type="IntAct" id="O07573">
    <property type="interactions" value="1"/>
</dbReference>
<dbReference type="STRING" id="224308.BSU09380"/>
<dbReference type="PaxDb" id="224308-BSU09380"/>
<dbReference type="DNASU" id="939744"/>
<dbReference type="EnsemblBacteria" id="CAB12777">
    <property type="protein sequence ID" value="CAB12777"/>
    <property type="gene ID" value="BSU_09380"/>
</dbReference>
<dbReference type="GeneID" id="939744"/>
<dbReference type="KEGG" id="bsu:BSU09380"/>
<dbReference type="PATRIC" id="fig|224308.179.peg.1011"/>
<dbReference type="eggNOG" id="COG1959">
    <property type="taxonomic scope" value="Bacteria"/>
</dbReference>
<dbReference type="InParanoid" id="O07573"/>
<dbReference type="OrthoDB" id="9795923at2"/>
<dbReference type="PhylomeDB" id="O07573"/>
<dbReference type="BioCyc" id="BSUB:BSU09380-MONOMER"/>
<dbReference type="Proteomes" id="UP000001570">
    <property type="component" value="Chromosome"/>
</dbReference>
<dbReference type="GO" id="GO:0005829">
    <property type="term" value="C:cytosol"/>
    <property type="evidence" value="ECO:0000318"/>
    <property type="project" value="GO_Central"/>
</dbReference>
<dbReference type="GO" id="GO:0051537">
    <property type="term" value="F:2 iron, 2 sulfur cluster binding"/>
    <property type="evidence" value="ECO:0007669"/>
    <property type="project" value="UniProtKB-KW"/>
</dbReference>
<dbReference type="GO" id="GO:0003677">
    <property type="term" value="F:DNA binding"/>
    <property type="evidence" value="ECO:0007669"/>
    <property type="project" value="UniProtKB-KW"/>
</dbReference>
<dbReference type="GO" id="GO:0003700">
    <property type="term" value="F:DNA-binding transcription factor activity"/>
    <property type="evidence" value="ECO:0000318"/>
    <property type="project" value="GO_Central"/>
</dbReference>
<dbReference type="GO" id="GO:0046872">
    <property type="term" value="F:metal ion binding"/>
    <property type="evidence" value="ECO:0007669"/>
    <property type="project" value="UniProtKB-KW"/>
</dbReference>
<dbReference type="GO" id="GO:0006355">
    <property type="term" value="P:regulation of DNA-templated transcription"/>
    <property type="evidence" value="ECO:0000318"/>
    <property type="project" value="GO_Central"/>
</dbReference>
<dbReference type="Gene3D" id="1.10.10.10">
    <property type="entry name" value="Winged helix-like DNA-binding domain superfamily/Winged helix DNA-binding domain"/>
    <property type="match status" value="1"/>
</dbReference>
<dbReference type="InterPro" id="IPR030489">
    <property type="entry name" value="TR_Rrf2-type_CS"/>
</dbReference>
<dbReference type="InterPro" id="IPR000944">
    <property type="entry name" value="Tscrpt_reg_Rrf2"/>
</dbReference>
<dbReference type="InterPro" id="IPR036388">
    <property type="entry name" value="WH-like_DNA-bd_sf"/>
</dbReference>
<dbReference type="InterPro" id="IPR036390">
    <property type="entry name" value="WH_DNA-bd_sf"/>
</dbReference>
<dbReference type="NCBIfam" id="TIGR00738">
    <property type="entry name" value="rrf2_super"/>
    <property type="match status" value="1"/>
</dbReference>
<dbReference type="PANTHER" id="PTHR33221:SF4">
    <property type="entry name" value="HTH-TYPE TRANSCRIPTIONAL REPRESSOR NSRR"/>
    <property type="match status" value="1"/>
</dbReference>
<dbReference type="PANTHER" id="PTHR33221">
    <property type="entry name" value="WINGED HELIX-TURN-HELIX TRANSCRIPTIONAL REGULATOR, RRF2 FAMILY"/>
    <property type="match status" value="1"/>
</dbReference>
<dbReference type="Pfam" id="PF02082">
    <property type="entry name" value="Rrf2"/>
    <property type="match status" value="1"/>
</dbReference>
<dbReference type="SUPFAM" id="SSF46785">
    <property type="entry name" value="Winged helix' DNA-binding domain"/>
    <property type="match status" value="1"/>
</dbReference>
<dbReference type="PROSITE" id="PS01332">
    <property type="entry name" value="HTH_RRF2_1"/>
    <property type="match status" value="1"/>
</dbReference>
<dbReference type="PROSITE" id="PS51197">
    <property type="entry name" value="HTH_RRF2_2"/>
    <property type="match status" value="1"/>
</dbReference>